<keyword id="KW-0963">Cytoplasm</keyword>
<keyword id="KW-0489">Methyltransferase</keyword>
<keyword id="KW-0698">rRNA processing</keyword>
<keyword id="KW-0949">S-adenosyl-L-methionine</keyword>
<keyword id="KW-0808">Transferase</keyword>
<protein>
    <recommendedName>
        <fullName evidence="1">Ribosomal RNA large subunit methyltransferase H</fullName>
        <ecNumber evidence="1">2.1.1.177</ecNumber>
    </recommendedName>
    <alternativeName>
        <fullName evidence="1">23S rRNA (pseudouridine1915-N3)-methyltransferase</fullName>
    </alternativeName>
    <alternativeName>
        <fullName evidence="1">23S rRNA m3Psi1915 methyltransferase</fullName>
    </alternativeName>
    <alternativeName>
        <fullName evidence="1">rRNA (pseudouridine-N3-)-methyltransferase RlmH</fullName>
    </alternativeName>
</protein>
<accession>P67518</accession>
<accession>A1IPN5</accession>
<accession>Q9JR59</accession>
<proteinExistence type="inferred from homology"/>
<organism>
    <name type="scientific">Neisseria meningitidis serogroup A / serotype 4A (strain DSM 15465 / Z2491)</name>
    <dbReference type="NCBI Taxonomy" id="122587"/>
    <lineage>
        <taxon>Bacteria</taxon>
        <taxon>Pseudomonadati</taxon>
        <taxon>Pseudomonadota</taxon>
        <taxon>Betaproteobacteria</taxon>
        <taxon>Neisseriales</taxon>
        <taxon>Neisseriaceae</taxon>
        <taxon>Neisseria</taxon>
    </lineage>
</organism>
<reference key="1">
    <citation type="journal article" date="2000" name="Nature">
        <title>Complete DNA sequence of a serogroup A strain of Neisseria meningitidis Z2491.</title>
        <authorList>
            <person name="Parkhill J."/>
            <person name="Achtman M."/>
            <person name="James K.D."/>
            <person name="Bentley S.D."/>
            <person name="Churcher C.M."/>
            <person name="Klee S.R."/>
            <person name="Morelli G."/>
            <person name="Basham D."/>
            <person name="Brown D."/>
            <person name="Chillingworth T."/>
            <person name="Davies R.M."/>
            <person name="Davis P."/>
            <person name="Devlin K."/>
            <person name="Feltwell T."/>
            <person name="Hamlin N."/>
            <person name="Holroyd S."/>
            <person name="Jagels K."/>
            <person name="Leather S."/>
            <person name="Moule S."/>
            <person name="Mungall K.L."/>
            <person name="Quail M.A."/>
            <person name="Rajandream M.A."/>
            <person name="Rutherford K.M."/>
            <person name="Simmonds M."/>
            <person name="Skelton J."/>
            <person name="Whitehead S."/>
            <person name="Spratt B.G."/>
            <person name="Barrell B.G."/>
        </authorList>
    </citation>
    <scope>NUCLEOTIDE SEQUENCE [LARGE SCALE GENOMIC DNA]</scope>
    <source>
        <strain>DSM 15465 / Z2491</strain>
    </source>
</reference>
<gene>
    <name evidence="1" type="primary">rlmH</name>
    <name type="ordered locus">NMA0418</name>
</gene>
<dbReference type="EC" id="2.1.1.177" evidence="1"/>
<dbReference type="EMBL" id="AL157959">
    <property type="protein sequence ID" value="CAM07706.1"/>
    <property type="molecule type" value="Genomic_DNA"/>
</dbReference>
<dbReference type="RefSeq" id="WP_002225675.1">
    <property type="nucleotide sequence ID" value="NC_003116.1"/>
</dbReference>
<dbReference type="SMR" id="P67518"/>
<dbReference type="EnsemblBacteria" id="CAM07706">
    <property type="protein sequence ID" value="CAM07706"/>
    <property type="gene ID" value="NMA0418"/>
</dbReference>
<dbReference type="KEGG" id="nma:NMA0418"/>
<dbReference type="HOGENOM" id="CLU_100552_1_0_4"/>
<dbReference type="Proteomes" id="UP000000626">
    <property type="component" value="Chromosome"/>
</dbReference>
<dbReference type="GO" id="GO:0005737">
    <property type="term" value="C:cytoplasm"/>
    <property type="evidence" value="ECO:0007669"/>
    <property type="project" value="UniProtKB-SubCell"/>
</dbReference>
<dbReference type="GO" id="GO:0070038">
    <property type="term" value="F:rRNA (pseudouridine-N3-)-methyltransferase activity"/>
    <property type="evidence" value="ECO:0007669"/>
    <property type="project" value="UniProtKB-UniRule"/>
</dbReference>
<dbReference type="CDD" id="cd18081">
    <property type="entry name" value="RlmH-like"/>
    <property type="match status" value="1"/>
</dbReference>
<dbReference type="Gene3D" id="3.40.1280.10">
    <property type="match status" value="1"/>
</dbReference>
<dbReference type="HAMAP" id="MF_00658">
    <property type="entry name" value="23SrRNA_methyltr_H"/>
    <property type="match status" value="1"/>
</dbReference>
<dbReference type="InterPro" id="IPR029028">
    <property type="entry name" value="Alpha/beta_knot_MTases"/>
</dbReference>
<dbReference type="InterPro" id="IPR003742">
    <property type="entry name" value="RlmH-like"/>
</dbReference>
<dbReference type="InterPro" id="IPR029026">
    <property type="entry name" value="tRNA_m1G_MTases_N"/>
</dbReference>
<dbReference type="NCBIfam" id="NF000986">
    <property type="entry name" value="PRK00103.1-4"/>
    <property type="match status" value="1"/>
</dbReference>
<dbReference type="PANTHER" id="PTHR33603">
    <property type="entry name" value="METHYLTRANSFERASE"/>
    <property type="match status" value="1"/>
</dbReference>
<dbReference type="PANTHER" id="PTHR33603:SF1">
    <property type="entry name" value="RIBOSOMAL RNA LARGE SUBUNIT METHYLTRANSFERASE H"/>
    <property type="match status" value="1"/>
</dbReference>
<dbReference type="Pfam" id="PF02590">
    <property type="entry name" value="SPOUT_MTase"/>
    <property type="match status" value="1"/>
</dbReference>
<dbReference type="PIRSF" id="PIRSF004505">
    <property type="entry name" value="MT_bac"/>
    <property type="match status" value="1"/>
</dbReference>
<dbReference type="SUPFAM" id="SSF75217">
    <property type="entry name" value="alpha/beta knot"/>
    <property type="match status" value="1"/>
</dbReference>
<evidence type="ECO:0000255" key="1">
    <source>
        <dbReference type="HAMAP-Rule" id="MF_00658"/>
    </source>
</evidence>
<comment type="function">
    <text evidence="1">Specifically methylates the pseudouridine at position 1915 (m3Psi1915) in 23S rRNA.</text>
</comment>
<comment type="catalytic activity">
    <reaction evidence="1">
        <text>pseudouridine(1915) in 23S rRNA + S-adenosyl-L-methionine = N(3)-methylpseudouridine(1915) in 23S rRNA + S-adenosyl-L-homocysteine + H(+)</text>
        <dbReference type="Rhea" id="RHEA:42752"/>
        <dbReference type="Rhea" id="RHEA-COMP:10221"/>
        <dbReference type="Rhea" id="RHEA-COMP:10222"/>
        <dbReference type="ChEBI" id="CHEBI:15378"/>
        <dbReference type="ChEBI" id="CHEBI:57856"/>
        <dbReference type="ChEBI" id="CHEBI:59789"/>
        <dbReference type="ChEBI" id="CHEBI:65314"/>
        <dbReference type="ChEBI" id="CHEBI:74486"/>
        <dbReference type="EC" id="2.1.1.177"/>
    </reaction>
</comment>
<comment type="subunit">
    <text evidence="1">Homodimer.</text>
</comment>
<comment type="subcellular location">
    <subcellularLocation>
        <location evidence="1">Cytoplasm</location>
    </subcellularLocation>
</comment>
<comment type="similarity">
    <text evidence="1">Belongs to the RNA methyltransferase RlmH family.</text>
</comment>
<name>RLMH_NEIMA</name>
<feature type="chain" id="PRO_0000198150" description="Ribosomal RNA large subunit methyltransferase H">
    <location>
        <begin position="1"/>
        <end position="156"/>
    </location>
</feature>
<feature type="binding site" evidence="1">
    <location>
        <position position="73"/>
    </location>
    <ligand>
        <name>S-adenosyl-L-methionine</name>
        <dbReference type="ChEBI" id="CHEBI:59789"/>
    </ligand>
</feature>
<feature type="binding site" evidence="1">
    <location>
        <position position="104"/>
    </location>
    <ligand>
        <name>S-adenosyl-L-methionine</name>
        <dbReference type="ChEBI" id="CHEBI:59789"/>
    </ligand>
</feature>
<feature type="binding site" evidence="1">
    <location>
        <begin position="123"/>
        <end position="128"/>
    </location>
    <ligand>
        <name>S-adenosyl-L-methionine</name>
        <dbReference type="ChEBI" id="CHEBI:59789"/>
    </ligand>
</feature>
<sequence length="156" mass="17510">MNITVLAVGTKMPRWVDEAVAEYAKRFGRDVAYALKEIKPEKRGAGVNAAQGMAAEEKRILEAIPQGAFLVVLDERGKAPTSVELAEHLKSWRQNGEHVCFVIGGADGMTDRLKQQARMMMRLSSLTLPHGMVRVFLTEQLYRAVSILHNHPYHRE</sequence>